<feature type="chain" id="PRO_0000080812" description="UPF0208 membrane protein ECA3038">
    <location>
        <begin position="1"/>
        <end position="151"/>
    </location>
</feature>
<feature type="transmembrane region" description="Helical" evidence="1">
    <location>
        <begin position="46"/>
        <end position="66"/>
    </location>
</feature>
<feature type="transmembrane region" description="Helical" evidence="1">
    <location>
        <begin position="69"/>
        <end position="89"/>
    </location>
</feature>
<keyword id="KW-0997">Cell inner membrane</keyword>
<keyword id="KW-1003">Cell membrane</keyword>
<keyword id="KW-0472">Membrane</keyword>
<keyword id="KW-1185">Reference proteome</keyword>
<keyword id="KW-0812">Transmembrane</keyword>
<keyword id="KW-1133">Transmembrane helix</keyword>
<proteinExistence type="inferred from homology"/>
<name>Y3038_PECAS</name>
<comment type="subcellular location">
    <subcellularLocation>
        <location evidence="1">Cell inner membrane</location>
        <topology evidence="1">Multi-pass membrane protein</topology>
    </subcellularLocation>
</comment>
<comment type="similarity">
    <text evidence="1">Belongs to the UPF0208 family.</text>
</comment>
<dbReference type="EMBL" id="BX950851">
    <property type="protein sequence ID" value="CAG75937.1"/>
    <property type="molecule type" value="Genomic_DNA"/>
</dbReference>
<dbReference type="STRING" id="218491.ECA3038"/>
<dbReference type="KEGG" id="eca:ECA3038"/>
<dbReference type="PATRIC" id="fig|218491.5.peg.3069"/>
<dbReference type="eggNOG" id="COG3092">
    <property type="taxonomic scope" value="Bacteria"/>
</dbReference>
<dbReference type="HOGENOM" id="CLU_128746_0_0_6"/>
<dbReference type="OrthoDB" id="7066670at2"/>
<dbReference type="Proteomes" id="UP000007966">
    <property type="component" value="Chromosome"/>
</dbReference>
<dbReference type="GO" id="GO:0005886">
    <property type="term" value="C:plasma membrane"/>
    <property type="evidence" value="ECO:0007669"/>
    <property type="project" value="UniProtKB-SubCell"/>
</dbReference>
<dbReference type="HAMAP" id="MF_01101">
    <property type="entry name" value="UPF0208"/>
    <property type="match status" value="1"/>
</dbReference>
<dbReference type="InterPro" id="IPR007334">
    <property type="entry name" value="UPF0208"/>
</dbReference>
<dbReference type="NCBIfam" id="NF002493">
    <property type="entry name" value="PRK01816.1"/>
    <property type="match status" value="1"/>
</dbReference>
<dbReference type="Pfam" id="PF04217">
    <property type="entry name" value="DUF412"/>
    <property type="match status" value="1"/>
</dbReference>
<evidence type="ECO:0000255" key="1">
    <source>
        <dbReference type="HAMAP-Rule" id="MF_01101"/>
    </source>
</evidence>
<protein>
    <recommendedName>
        <fullName evidence="1">UPF0208 membrane protein ECA3038</fullName>
    </recommendedName>
</protein>
<reference key="1">
    <citation type="journal article" date="2004" name="Proc. Natl. Acad. Sci. U.S.A.">
        <title>Genome sequence of the enterobacterial phytopathogen Erwinia carotovora subsp. atroseptica and characterization of virulence factors.</title>
        <authorList>
            <person name="Bell K.S."/>
            <person name="Sebaihia M."/>
            <person name="Pritchard L."/>
            <person name="Holden M.T.G."/>
            <person name="Hyman L.J."/>
            <person name="Holeva M.C."/>
            <person name="Thomson N.R."/>
            <person name="Bentley S.D."/>
            <person name="Churcher L.J.C."/>
            <person name="Mungall K."/>
            <person name="Atkin R."/>
            <person name="Bason N."/>
            <person name="Brooks K."/>
            <person name="Chillingworth T."/>
            <person name="Clark K."/>
            <person name="Doggett J."/>
            <person name="Fraser A."/>
            <person name="Hance Z."/>
            <person name="Hauser H."/>
            <person name="Jagels K."/>
            <person name="Moule S."/>
            <person name="Norbertczak H."/>
            <person name="Ormond D."/>
            <person name="Price C."/>
            <person name="Quail M.A."/>
            <person name="Sanders M."/>
            <person name="Walker D."/>
            <person name="Whitehead S."/>
            <person name="Salmond G.P.C."/>
            <person name="Birch P.R.J."/>
            <person name="Parkhill J."/>
            <person name="Toth I.K."/>
        </authorList>
    </citation>
    <scope>NUCLEOTIDE SEQUENCE [LARGE SCALE GENOMIC DNA]</scope>
    <source>
        <strain>SCRI 1043 / ATCC BAA-672</strain>
    </source>
</reference>
<accession>Q6D2Q7</accession>
<sequence length="151" mass="17098">MATKPDSRISWLQLLQRGQHYMKTWPAEKQLAPLFPENRVARATRFGIRIMPPLAVFTLTWQIALGGQLGPAIATALFACSLPLQGLWWLGRRSVTPLPPTLAQWFHEIRHKLLESGQALAPLEEAPTYQTLADVLKRAFNQLDKTFLDDL</sequence>
<organism>
    <name type="scientific">Pectobacterium atrosepticum (strain SCRI 1043 / ATCC BAA-672)</name>
    <name type="common">Erwinia carotovora subsp. atroseptica</name>
    <dbReference type="NCBI Taxonomy" id="218491"/>
    <lineage>
        <taxon>Bacteria</taxon>
        <taxon>Pseudomonadati</taxon>
        <taxon>Pseudomonadota</taxon>
        <taxon>Gammaproteobacteria</taxon>
        <taxon>Enterobacterales</taxon>
        <taxon>Pectobacteriaceae</taxon>
        <taxon>Pectobacterium</taxon>
    </lineage>
</organism>
<gene>
    <name type="ordered locus">ECA3038</name>
</gene>